<name>SYM_RUEST</name>
<accession>Q1GEI7</accession>
<protein>
    <recommendedName>
        <fullName evidence="1">Methionine--tRNA ligase</fullName>
        <ecNumber evidence="1">6.1.1.10</ecNumber>
    </recommendedName>
    <alternativeName>
        <fullName evidence="1">Methionyl-tRNA synthetase</fullName>
        <shortName evidence="1">MetRS</shortName>
    </alternativeName>
</protein>
<gene>
    <name evidence="1" type="primary">metG</name>
    <name type="ordered locus">TM1040_2197</name>
</gene>
<sequence length="573" mass="64246">MARILITSALPYINGIKHLGNLVGSQLPADLYARYNRGRGHEVMFLCATDEHGTPAELAAAKAGKPVADYCAEMHAVQADIAKRFGLSFDHYGRSSSPQNHALTQHFAGKLEEAGLITEVSEKQVYSNADGRFLPDRYIEGTCPNCGFEKARGDQCEECTKQLDPTDLINPRSAISGSTDLEVRETKHLFLRQSAMRDQLDQWIDSKTDWPVLTTSIAKKWLHDGDGLQDRGITRDLDWGIAVKKGDADWPGMEGKVFYVWFDAPIEYIAAAGEWAEAHGKTDADWERWWRTDKGADDVKYVQFMGKDNVPFHTLSFPATLLGSGEPWKMVDHLKSFNYLNYDGGQFSTSQGRGVFMDQALEILPADYWRWWLLSHAPESSDSEFTWENFQQSVNKDLADVLGNFVSRITKFCRSKFGEEVPDGGTWGEQEQTLIEELSTRIGAFERHMEAMEVRKSAQELRAIWVAGNEYLQSAAPWSVFKEDPERAAGQVRLGLNLIRLYAVLSAPFIPDASDRLFAALGTEDRSWPEDVAAALAALPAGHAFTVPEVLFAKITDEQREEWQERFAGGRSA</sequence>
<proteinExistence type="inferred from homology"/>
<keyword id="KW-0030">Aminoacyl-tRNA synthetase</keyword>
<keyword id="KW-0067">ATP-binding</keyword>
<keyword id="KW-0963">Cytoplasm</keyword>
<keyword id="KW-0436">Ligase</keyword>
<keyword id="KW-0479">Metal-binding</keyword>
<keyword id="KW-0547">Nucleotide-binding</keyword>
<keyword id="KW-0648">Protein biosynthesis</keyword>
<keyword id="KW-1185">Reference proteome</keyword>
<keyword id="KW-0862">Zinc</keyword>
<organism>
    <name type="scientific">Ruegeria sp. (strain TM1040)</name>
    <name type="common">Silicibacter sp.</name>
    <dbReference type="NCBI Taxonomy" id="292414"/>
    <lineage>
        <taxon>Bacteria</taxon>
        <taxon>Pseudomonadati</taxon>
        <taxon>Pseudomonadota</taxon>
        <taxon>Alphaproteobacteria</taxon>
        <taxon>Rhodobacterales</taxon>
        <taxon>Roseobacteraceae</taxon>
        <taxon>Ruegeria</taxon>
    </lineage>
</organism>
<reference key="1">
    <citation type="submission" date="2006-05" db="EMBL/GenBank/DDBJ databases">
        <title>Complete sequence of chromosome of Silicibacter sp. TM1040.</title>
        <authorList>
            <consortium name="US DOE Joint Genome Institute"/>
            <person name="Copeland A."/>
            <person name="Lucas S."/>
            <person name="Lapidus A."/>
            <person name="Barry K."/>
            <person name="Detter J.C."/>
            <person name="Glavina del Rio T."/>
            <person name="Hammon N."/>
            <person name="Israni S."/>
            <person name="Dalin E."/>
            <person name="Tice H."/>
            <person name="Pitluck S."/>
            <person name="Brettin T."/>
            <person name="Bruce D."/>
            <person name="Han C."/>
            <person name="Tapia R."/>
            <person name="Goodwin L."/>
            <person name="Thompson L.S."/>
            <person name="Gilna P."/>
            <person name="Schmutz J."/>
            <person name="Larimer F."/>
            <person name="Land M."/>
            <person name="Hauser L."/>
            <person name="Kyrpides N."/>
            <person name="Kim E."/>
            <person name="Belas R."/>
            <person name="Moran M.A."/>
            <person name="Buchan A."/>
            <person name="Gonzalez J.M."/>
            <person name="Schell M.A."/>
            <person name="Sun F."/>
            <person name="Richardson P."/>
        </authorList>
    </citation>
    <scope>NUCLEOTIDE SEQUENCE [LARGE SCALE GENOMIC DNA]</scope>
    <source>
        <strain>TM1040</strain>
    </source>
</reference>
<feature type="chain" id="PRO_0000331917" description="Methionine--tRNA ligase">
    <location>
        <begin position="1"/>
        <end position="573"/>
    </location>
</feature>
<feature type="short sequence motif" description="'HIGH' region">
    <location>
        <begin position="11"/>
        <end position="21"/>
    </location>
</feature>
<feature type="short sequence motif" description="'KMSKS' region">
    <location>
        <begin position="346"/>
        <end position="350"/>
    </location>
</feature>
<feature type="binding site" evidence="1">
    <location>
        <position position="143"/>
    </location>
    <ligand>
        <name>Zn(2+)</name>
        <dbReference type="ChEBI" id="CHEBI:29105"/>
    </ligand>
</feature>
<feature type="binding site" evidence="1">
    <location>
        <position position="146"/>
    </location>
    <ligand>
        <name>Zn(2+)</name>
        <dbReference type="ChEBI" id="CHEBI:29105"/>
    </ligand>
</feature>
<feature type="binding site" evidence="1">
    <location>
        <position position="156"/>
    </location>
    <ligand>
        <name>Zn(2+)</name>
        <dbReference type="ChEBI" id="CHEBI:29105"/>
    </ligand>
</feature>
<feature type="binding site" evidence="1">
    <location>
        <position position="159"/>
    </location>
    <ligand>
        <name>Zn(2+)</name>
        <dbReference type="ChEBI" id="CHEBI:29105"/>
    </ligand>
</feature>
<feature type="binding site" evidence="1">
    <location>
        <position position="349"/>
    </location>
    <ligand>
        <name>ATP</name>
        <dbReference type="ChEBI" id="CHEBI:30616"/>
    </ligand>
</feature>
<dbReference type="EC" id="6.1.1.10" evidence="1"/>
<dbReference type="EMBL" id="CP000377">
    <property type="protein sequence ID" value="ABF64929.1"/>
    <property type="status" value="ALT_INIT"/>
    <property type="molecule type" value="Genomic_DNA"/>
</dbReference>
<dbReference type="RefSeq" id="WP_011539518.1">
    <property type="nucleotide sequence ID" value="NC_008044.1"/>
</dbReference>
<dbReference type="SMR" id="Q1GEI7"/>
<dbReference type="STRING" id="292414.TM1040_2197"/>
<dbReference type="KEGG" id="sit:TM1040_2197"/>
<dbReference type="eggNOG" id="COG0143">
    <property type="taxonomic scope" value="Bacteria"/>
</dbReference>
<dbReference type="HOGENOM" id="CLU_009710_3_2_5"/>
<dbReference type="OrthoDB" id="9810191at2"/>
<dbReference type="Proteomes" id="UP000000636">
    <property type="component" value="Chromosome"/>
</dbReference>
<dbReference type="GO" id="GO:0017101">
    <property type="term" value="C:aminoacyl-tRNA synthetase multienzyme complex"/>
    <property type="evidence" value="ECO:0007669"/>
    <property type="project" value="TreeGrafter"/>
</dbReference>
<dbReference type="GO" id="GO:0005829">
    <property type="term" value="C:cytosol"/>
    <property type="evidence" value="ECO:0007669"/>
    <property type="project" value="TreeGrafter"/>
</dbReference>
<dbReference type="GO" id="GO:0005524">
    <property type="term" value="F:ATP binding"/>
    <property type="evidence" value="ECO:0007669"/>
    <property type="project" value="UniProtKB-UniRule"/>
</dbReference>
<dbReference type="GO" id="GO:0046872">
    <property type="term" value="F:metal ion binding"/>
    <property type="evidence" value="ECO:0007669"/>
    <property type="project" value="UniProtKB-KW"/>
</dbReference>
<dbReference type="GO" id="GO:0004825">
    <property type="term" value="F:methionine-tRNA ligase activity"/>
    <property type="evidence" value="ECO:0007669"/>
    <property type="project" value="UniProtKB-UniRule"/>
</dbReference>
<dbReference type="GO" id="GO:0006431">
    <property type="term" value="P:methionyl-tRNA aminoacylation"/>
    <property type="evidence" value="ECO:0007669"/>
    <property type="project" value="UniProtKB-UniRule"/>
</dbReference>
<dbReference type="CDD" id="cd07957">
    <property type="entry name" value="Anticodon_Ia_Met"/>
    <property type="match status" value="1"/>
</dbReference>
<dbReference type="CDD" id="cd00814">
    <property type="entry name" value="MetRS_core"/>
    <property type="match status" value="1"/>
</dbReference>
<dbReference type="FunFam" id="2.20.28.20:FF:000001">
    <property type="entry name" value="Methionine--tRNA ligase"/>
    <property type="match status" value="1"/>
</dbReference>
<dbReference type="Gene3D" id="3.40.50.620">
    <property type="entry name" value="HUPs"/>
    <property type="match status" value="1"/>
</dbReference>
<dbReference type="Gene3D" id="1.10.730.10">
    <property type="entry name" value="Isoleucyl-tRNA Synthetase, Domain 1"/>
    <property type="match status" value="1"/>
</dbReference>
<dbReference type="Gene3D" id="2.20.28.20">
    <property type="entry name" value="Methionyl-tRNA synthetase, Zn-domain"/>
    <property type="match status" value="1"/>
</dbReference>
<dbReference type="HAMAP" id="MF_00098">
    <property type="entry name" value="Met_tRNA_synth_type1"/>
    <property type="match status" value="1"/>
</dbReference>
<dbReference type="InterPro" id="IPR041872">
    <property type="entry name" value="Anticodon_Met"/>
</dbReference>
<dbReference type="InterPro" id="IPR023458">
    <property type="entry name" value="Met-tRNA_ligase_1"/>
</dbReference>
<dbReference type="InterPro" id="IPR014758">
    <property type="entry name" value="Met-tRNA_synth"/>
</dbReference>
<dbReference type="InterPro" id="IPR015413">
    <property type="entry name" value="Methionyl/Leucyl_tRNA_Synth"/>
</dbReference>
<dbReference type="InterPro" id="IPR033911">
    <property type="entry name" value="MetRS_core"/>
</dbReference>
<dbReference type="InterPro" id="IPR029038">
    <property type="entry name" value="MetRS_Zn"/>
</dbReference>
<dbReference type="InterPro" id="IPR014729">
    <property type="entry name" value="Rossmann-like_a/b/a_fold"/>
</dbReference>
<dbReference type="InterPro" id="IPR009080">
    <property type="entry name" value="tRNAsynth_Ia_anticodon-bd"/>
</dbReference>
<dbReference type="NCBIfam" id="TIGR00398">
    <property type="entry name" value="metG"/>
    <property type="match status" value="1"/>
</dbReference>
<dbReference type="PANTHER" id="PTHR45765">
    <property type="entry name" value="METHIONINE--TRNA LIGASE"/>
    <property type="match status" value="1"/>
</dbReference>
<dbReference type="PANTHER" id="PTHR45765:SF1">
    <property type="entry name" value="METHIONINE--TRNA LIGASE, CYTOPLASMIC"/>
    <property type="match status" value="1"/>
</dbReference>
<dbReference type="Pfam" id="PF19303">
    <property type="entry name" value="Anticodon_3"/>
    <property type="match status" value="1"/>
</dbReference>
<dbReference type="Pfam" id="PF09334">
    <property type="entry name" value="tRNA-synt_1g"/>
    <property type="match status" value="1"/>
</dbReference>
<dbReference type="PRINTS" id="PR01041">
    <property type="entry name" value="TRNASYNTHMET"/>
</dbReference>
<dbReference type="SUPFAM" id="SSF47323">
    <property type="entry name" value="Anticodon-binding domain of a subclass of class I aminoacyl-tRNA synthetases"/>
    <property type="match status" value="1"/>
</dbReference>
<dbReference type="SUPFAM" id="SSF57770">
    <property type="entry name" value="Methionyl-tRNA synthetase (MetRS), Zn-domain"/>
    <property type="match status" value="1"/>
</dbReference>
<dbReference type="SUPFAM" id="SSF52374">
    <property type="entry name" value="Nucleotidylyl transferase"/>
    <property type="match status" value="1"/>
</dbReference>
<comment type="function">
    <text evidence="1">Is required not only for elongation of protein synthesis but also for the initiation of all mRNA translation through initiator tRNA(fMet) aminoacylation.</text>
</comment>
<comment type="catalytic activity">
    <reaction evidence="1">
        <text>tRNA(Met) + L-methionine + ATP = L-methionyl-tRNA(Met) + AMP + diphosphate</text>
        <dbReference type="Rhea" id="RHEA:13481"/>
        <dbReference type="Rhea" id="RHEA-COMP:9667"/>
        <dbReference type="Rhea" id="RHEA-COMP:9698"/>
        <dbReference type="ChEBI" id="CHEBI:30616"/>
        <dbReference type="ChEBI" id="CHEBI:33019"/>
        <dbReference type="ChEBI" id="CHEBI:57844"/>
        <dbReference type="ChEBI" id="CHEBI:78442"/>
        <dbReference type="ChEBI" id="CHEBI:78530"/>
        <dbReference type="ChEBI" id="CHEBI:456215"/>
        <dbReference type="EC" id="6.1.1.10"/>
    </reaction>
</comment>
<comment type="cofactor">
    <cofactor evidence="1">
        <name>Zn(2+)</name>
        <dbReference type="ChEBI" id="CHEBI:29105"/>
    </cofactor>
    <text evidence="1">Binds 1 zinc ion per subunit.</text>
</comment>
<comment type="subunit">
    <text evidence="1">Monomer.</text>
</comment>
<comment type="subcellular location">
    <subcellularLocation>
        <location evidence="1">Cytoplasm</location>
    </subcellularLocation>
</comment>
<comment type="similarity">
    <text evidence="1">Belongs to the class-I aminoacyl-tRNA synthetase family. MetG type 1 subfamily.</text>
</comment>
<comment type="sequence caution" evidence="2">
    <conflict type="erroneous initiation">
        <sequence resource="EMBL-CDS" id="ABF64929"/>
    </conflict>
</comment>
<evidence type="ECO:0000255" key="1">
    <source>
        <dbReference type="HAMAP-Rule" id="MF_00098"/>
    </source>
</evidence>
<evidence type="ECO:0000305" key="2"/>